<sequence>MGQGASKIFGKLFSKKEVRILMVGLDAAGKTTILYKLMLGEVVTTVPTIGFNVETVEYKNINFTVWDVGGQDSIRPLWRHYYQNTDALIYVIDSADLEPKRIEDAKNELHTLLGEDELRDAALLVFANKQDLPKAMSTTDLTERLGLQELKKRDWYIQPTCARSGDGLYQGLDWLSDYIFDKKNKKKGKKR</sequence>
<keyword id="KW-0931">ER-Golgi transport</keyword>
<keyword id="KW-0333">Golgi apparatus</keyword>
<keyword id="KW-0342">GTP-binding</keyword>
<keyword id="KW-0449">Lipoprotein</keyword>
<keyword id="KW-0519">Myristate</keyword>
<keyword id="KW-0547">Nucleotide-binding</keyword>
<keyword id="KW-0653">Protein transport</keyword>
<keyword id="KW-0813">Transport</keyword>
<organism>
    <name type="scientific">Giardia intestinalis</name>
    <name type="common">Giardia lamblia</name>
    <dbReference type="NCBI Taxonomy" id="5741"/>
    <lineage>
        <taxon>Eukaryota</taxon>
        <taxon>Metamonada</taxon>
        <taxon>Diplomonadida</taxon>
        <taxon>Hexamitidae</taxon>
        <taxon>Giardiinae</taxon>
        <taxon>Giardia</taxon>
    </lineage>
</organism>
<proteinExistence type="inferred from homology"/>
<protein>
    <recommendedName>
        <fullName>ADP-ribosylation factor</fullName>
    </recommendedName>
</protein>
<evidence type="ECO:0000250" key="1"/>
<evidence type="ECO:0000255" key="2"/>
<evidence type="ECO:0000305" key="3"/>
<accession>P26991</accession>
<reference key="1">
    <citation type="journal article" date="1992" name="J. Biol. Chem.">
        <title>Guanine nucleotide-binding proteins in the intestinal parasite Giardia lamblia. Isolation of a gene encoding an approximately 20-kDa ADP-ribosylation factor.</title>
        <authorList>
            <person name="Murtagh J.J. Jr."/>
            <person name="Mowatt M.W."/>
            <person name="Lee C.-M."/>
            <person name="Lee F.-J.S."/>
            <person name="Mishima K."/>
            <person name="Nash T.E."/>
            <person name="Moss J."/>
            <person name="Vaughan M."/>
        </authorList>
    </citation>
    <scope>NUCLEOTIDE SEQUENCE [GENOMIC DNA]</scope>
</reference>
<comment type="function">
    <text>GTP-binding protein involved in protein trafficking; may modulate vesicle budding and uncoating within the Golgi apparatus.</text>
</comment>
<comment type="subcellular location">
    <subcellularLocation>
        <location>Golgi apparatus</location>
    </subcellularLocation>
</comment>
<comment type="similarity">
    <text evidence="3">Belongs to the small GTPase superfamily. Arf family.</text>
</comment>
<name>ARF_GIAIN</name>
<feature type="initiator methionine" description="Removed" evidence="2">
    <location>
        <position position="1"/>
    </location>
</feature>
<feature type="chain" id="PRO_0000207424" description="ADP-ribosylation factor">
    <location>
        <begin position="2"/>
        <end position="191"/>
    </location>
</feature>
<feature type="binding site" evidence="1">
    <location>
        <begin position="24"/>
        <end position="31"/>
    </location>
    <ligand>
        <name>GTP</name>
        <dbReference type="ChEBI" id="CHEBI:37565"/>
    </ligand>
</feature>
<feature type="binding site" evidence="1">
    <location>
        <begin position="67"/>
        <end position="71"/>
    </location>
    <ligand>
        <name>GTP</name>
        <dbReference type="ChEBI" id="CHEBI:37565"/>
    </ligand>
</feature>
<feature type="binding site" evidence="1">
    <location>
        <begin position="128"/>
        <end position="131"/>
    </location>
    <ligand>
        <name>GTP</name>
        <dbReference type="ChEBI" id="CHEBI:37565"/>
    </ligand>
</feature>
<feature type="lipid moiety-binding region" description="N-myristoyl glycine" evidence="2">
    <location>
        <position position="2"/>
    </location>
</feature>
<dbReference type="EMBL" id="M86513">
    <property type="status" value="NOT_ANNOTATED_CDS"/>
    <property type="molecule type" value="Genomic_DNA"/>
</dbReference>
<dbReference type="PIR" id="S29008">
    <property type="entry name" value="S29008"/>
</dbReference>
<dbReference type="SMR" id="P26991"/>
<dbReference type="VEuPathDB" id="GiardiaDB:DHA2_7789"/>
<dbReference type="VEuPathDB" id="GiardiaDB:GL50581_1483"/>
<dbReference type="VEuPathDB" id="GiardiaDB:GL50803_007789"/>
<dbReference type="VEuPathDB" id="GiardiaDB:QR46_4134"/>
<dbReference type="eggNOG" id="KOG0070">
    <property type="taxonomic scope" value="Eukaryota"/>
</dbReference>
<dbReference type="OrthoDB" id="2011769at2759"/>
<dbReference type="GO" id="GO:0005794">
    <property type="term" value="C:Golgi apparatus"/>
    <property type="evidence" value="ECO:0007669"/>
    <property type="project" value="UniProtKB-SubCell"/>
</dbReference>
<dbReference type="GO" id="GO:0005525">
    <property type="term" value="F:GTP binding"/>
    <property type="evidence" value="ECO:0007669"/>
    <property type="project" value="UniProtKB-KW"/>
</dbReference>
<dbReference type="GO" id="GO:0003924">
    <property type="term" value="F:GTPase activity"/>
    <property type="evidence" value="ECO:0007669"/>
    <property type="project" value="InterPro"/>
</dbReference>
<dbReference type="GO" id="GO:0015031">
    <property type="term" value="P:protein transport"/>
    <property type="evidence" value="ECO:0007669"/>
    <property type="project" value="UniProtKB-KW"/>
</dbReference>
<dbReference type="GO" id="GO:0016192">
    <property type="term" value="P:vesicle-mediated transport"/>
    <property type="evidence" value="ECO:0007669"/>
    <property type="project" value="UniProtKB-KW"/>
</dbReference>
<dbReference type="CDD" id="cd04150">
    <property type="entry name" value="Arf1_5_like"/>
    <property type="match status" value="1"/>
</dbReference>
<dbReference type="FunFam" id="3.40.50.300:FF:003500">
    <property type="entry name" value="ADP-ribosylation factor 1"/>
    <property type="match status" value="1"/>
</dbReference>
<dbReference type="Gene3D" id="3.40.50.300">
    <property type="entry name" value="P-loop containing nucleotide triphosphate hydrolases"/>
    <property type="match status" value="1"/>
</dbReference>
<dbReference type="InterPro" id="IPR045872">
    <property type="entry name" value="Arf1-5-like"/>
</dbReference>
<dbReference type="InterPro" id="IPR027417">
    <property type="entry name" value="P-loop_NTPase"/>
</dbReference>
<dbReference type="InterPro" id="IPR005225">
    <property type="entry name" value="Small_GTP-bd"/>
</dbReference>
<dbReference type="InterPro" id="IPR024156">
    <property type="entry name" value="Small_GTPase_ARF"/>
</dbReference>
<dbReference type="InterPro" id="IPR006689">
    <property type="entry name" value="Small_GTPase_ARF/SAR"/>
</dbReference>
<dbReference type="NCBIfam" id="TIGR00231">
    <property type="entry name" value="small_GTP"/>
    <property type="match status" value="1"/>
</dbReference>
<dbReference type="PANTHER" id="PTHR11711">
    <property type="entry name" value="ADP RIBOSYLATION FACTOR-RELATED"/>
    <property type="match status" value="1"/>
</dbReference>
<dbReference type="Pfam" id="PF00025">
    <property type="entry name" value="Arf"/>
    <property type="match status" value="1"/>
</dbReference>
<dbReference type="PRINTS" id="PR00328">
    <property type="entry name" value="SAR1GTPBP"/>
</dbReference>
<dbReference type="SMART" id="SM00177">
    <property type="entry name" value="ARF"/>
    <property type="match status" value="1"/>
</dbReference>
<dbReference type="SMART" id="SM00178">
    <property type="entry name" value="SAR"/>
    <property type="match status" value="1"/>
</dbReference>
<dbReference type="SUPFAM" id="SSF52540">
    <property type="entry name" value="P-loop containing nucleoside triphosphate hydrolases"/>
    <property type="match status" value="1"/>
</dbReference>
<dbReference type="PROSITE" id="PS51417">
    <property type="entry name" value="ARF"/>
    <property type="match status" value="1"/>
</dbReference>